<dbReference type="EC" id="5.3.1.16" evidence="1"/>
<dbReference type="EMBL" id="CP001025">
    <property type="protein sequence ID" value="ACB62858.1"/>
    <property type="molecule type" value="Genomic_DNA"/>
</dbReference>
<dbReference type="RefSeq" id="WP_006751801.1">
    <property type="nucleotide sequence ID" value="NC_010551.1"/>
</dbReference>
<dbReference type="SMR" id="B1YRW0"/>
<dbReference type="GeneID" id="93084238"/>
<dbReference type="KEGG" id="bac:BamMC406_0357"/>
<dbReference type="HOGENOM" id="CLU_048577_1_1_4"/>
<dbReference type="OrthoDB" id="9807749at2"/>
<dbReference type="UniPathway" id="UPA00031">
    <property type="reaction ID" value="UER00009"/>
</dbReference>
<dbReference type="Proteomes" id="UP000001680">
    <property type="component" value="Chromosome 1"/>
</dbReference>
<dbReference type="GO" id="GO:0005737">
    <property type="term" value="C:cytoplasm"/>
    <property type="evidence" value="ECO:0007669"/>
    <property type="project" value="UniProtKB-SubCell"/>
</dbReference>
<dbReference type="GO" id="GO:0003949">
    <property type="term" value="F:1-(5-phosphoribosyl)-5-[(5-phosphoribosylamino)methylideneamino]imidazole-4-carboxamide isomerase activity"/>
    <property type="evidence" value="ECO:0007669"/>
    <property type="project" value="UniProtKB-UniRule"/>
</dbReference>
<dbReference type="GO" id="GO:0000105">
    <property type="term" value="P:L-histidine biosynthetic process"/>
    <property type="evidence" value="ECO:0007669"/>
    <property type="project" value="UniProtKB-UniRule"/>
</dbReference>
<dbReference type="GO" id="GO:0000162">
    <property type="term" value="P:L-tryptophan biosynthetic process"/>
    <property type="evidence" value="ECO:0007669"/>
    <property type="project" value="TreeGrafter"/>
</dbReference>
<dbReference type="CDD" id="cd04732">
    <property type="entry name" value="HisA"/>
    <property type="match status" value="1"/>
</dbReference>
<dbReference type="FunFam" id="3.20.20.70:FF:000009">
    <property type="entry name" value="1-(5-phosphoribosyl)-5-[(5-phosphoribosylamino)methylideneamino] imidazole-4-carboxamide isomerase"/>
    <property type="match status" value="1"/>
</dbReference>
<dbReference type="Gene3D" id="3.20.20.70">
    <property type="entry name" value="Aldolase class I"/>
    <property type="match status" value="1"/>
</dbReference>
<dbReference type="HAMAP" id="MF_01014">
    <property type="entry name" value="HisA"/>
    <property type="match status" value="1"/>
</dbReference>
<dbReference type="InterPro" id="IPR013785">
    <property type="entry name" value="Aldolase_TIM"/>
</dbReference>
<dbReference type="InterPro" id="IPR006062">
    <property type="entry name" value="His_biosynth"/>
</dbReference>
<dbReference type="InterPro" id="IPR006063">
    <property type="entry name" value="HisA_bact_arch"/>
</dbReference>
<dbReference type="InterPro" id="IPR044524">
    <property type="entry name" value="Isoase_HisA-like"/>
</dbReference>
<dbReference type="InterPro" id="IPR023016">
    <property type="entry name" value="Isoase_HisA-like_bact"/>
</dbReference>
<dbReference type="InterPro" id="IPR011060">
    <property type="entry name" value="RibuloseP-bd_barrel"/>
</dbReference>
<dbReference type="NCBIfam" id="TIGR00007">
    <property type="entry name" value="1-(5-phosphoribosyl)-5-[(5-phosphoribosylamino)methylideneamino]imidazole-4-carboxamide isomerase"/>
    <property type="match status" value="1"/>
</dbReference>
<dbReference type="NCBIfam" id="NF010112">
    <property type="entry name" value="PRK13585.1"/>
    <property type="match status" value="1"/>
</dbReference>
<dbReference type="PANTHER" id="PTHR43090">
    <property type="entry name" value="1-(5-PHOSPHORIBOSYL)-5-[(5-PHOSPHORIBOSYLAMINO)METHYLIDENEAMINO] IMIDAZOLE-4-CARBOXAMIDE ISOMERASE"/>
    <property type="match status" value="1"/>
</dbReference>
<dbReference type="PANTHER" id="PTHR43090:SF2">
    <property type="entry name" value="1-(5-PHOSPHORIBOSYL)-5-[(5-PHOSPHORIBOSYLAMINO)METHYLIDENEAMINO] IMIDAZOLE-4-CARBOXAMIDE ISOMERASE"/>
    <property type="match status" value="1"/>
</dbReference>
<dbReference type="Pfam" id="PF00977">
    <property type="entry name" value="His_biosynth"/>
    <property type="match status" value="1"/>
</dbReference>
<dbReference type="SUPFAM" id="SSF51366">
    <property type="entry name" value="Ribulose-phoshate binding barrel"/>
    <property type="match status" value="1"/>
</dbReference>
<organism>
    <name type="scientific">Burkholderia ambifaria (strain MC40-6)</name>
    <dbReference type="NCBI Taxonomy" id="398577"/>
    <lineage>
        <taxon>Bacteria</taxon>
        <taxon>Pseudomonadati</taxon>
        <taxon>Pseudomonadota</taxon>
        <taxon>Betaproteobacteria</taxon>
        <taxon>Burkholderiales</taxon>
        <taxon>Burkholderiaceae</taxon>
        <taxon>Burkholderia</taxon>
        <taxon>Burkholderia cepacia complex</taxon>
    </lineage>
</organism>
<name>HIS4_BURA4</name>
<feature type="chain" id="PRO_1000135087" description="1-(5-phosphoribosyl)-5-[(5-phosphoribosylamino)methylideneamino] imidazole-4-carboxamide isomerase">
    <location>
        <begin position="1"/>
        <end position="251"/>
    </location>
</feature>
<feature type="active site" description="Proton acceptor" evidence="1">
    <location>
        <position position="8"/>
    </location>
</feature>
<feature type="active site" description="Proton donor" evidence="1">
    <location>
        <position position="131"/>
    </location>
</feature>
<comment type="catalytic activity">
    <reaction evidence="1">
        <text>1-(5-phospho-beta-D-ribosyl)-5-[(5-phospho-beta-D-ribosylamino)methylideneamino]imidazole-4-carboxamide = 5-[(5-phospho-1-deoxy-D-ribulos-1-ylimino)methylamino]-1-(5-phospho-beta-D-ribosyl)imidazole-4-carboxamide</text>
        <dbReference type="Rhea" id="RHEA:15469"/>
        <dbReference type="ChEBI" id="CHEBI:58435"/>
        <dbReference type="ChEBI" id="CHEBI:58525"/>
        <dbReference type="EC" id="5.3.1.16"/>
    </reaction>
</comment>
<comment type="pathway">
    <text evidence="1">Amino-acid biosynthesis; L-histidine biosynthesis; L-histidine from 5-phospho-alpha-D-ribose 1-diphosphate: step 4/9.</text>
</comment>
<comment type="subcellular location">
    <subcellularLocation>
        <location evidence="1">Cytoplasm</location>
    </subcellularLocation>
</comment>
<comment type="similarity">
    <text evidence="1">Belongs to the HisA/HisF family.</text>
</comment>
<sequence>MLLIPAIDLKDGQCVRLKQGDMDQATIFSEDPAAMARKWVDLGARRLHLVDLNGAFAGKPKNLDAIEAILDEVGDEIPVQLGGGIRSLETVEKYLDAGLSYVIIGTAAVKDPGFLRDACTAFAGNIIVGLDAKDGKVATDGWSKLTGHEVIDLALKFEDYGVESIVYTDIGRDGMLQGINIEATVKLAQAVGIPVIASGGLSNLADIDSLCEVEEHGVEGVICGRAIYSGDLDFAAAQKRADELNGELDNA</sequence>
<evidence type="ECO:0000255" key="1">
    <source>
        <dbReference type="HAMAP-Rule" id="MF_01014"/>
    </source>
</evidence>
<reference key="1">
    <citation type="submission" date="2008-04" db="EMBL/GenBank/DDBJ databases">
        <title>Complete sequence of chromosome 1 of Burkholderia ambifaria MC40-6.</title>
        <authorList>
            <person name="Copeland A."/>
            <person name="Lucas S."/>
            <person name="Lapidus A."/>
            <person name="Glavina del Rio T."/>
            <person name="Dalin E."/>
            <person name="Tice H."/>
            <person name="Pitluck S."/>
            <person name="Chain P."/>
            <person name="Malfatti S."/>
            <person name="Shin M."/>
            <person name="Vergez L."/>
            <person name="Lang D."/>
            <person name="Schmutz J."/>
            <person name="Larimer F."/>
            <person name="Land M."/>
            <person name="Hauser L."/>
            <person name="Kyrpides N."/>
            <person name="Lykidis A."/>
            <person name="Ramette A."/>
            <person name="Konstantinidis K."/>
            <person name="Tiedje J."/>
            <person name="Richardson P."/>
        </authorList>
    </citation>
    <scope>NUCLEOTIDE SEQUENCE [LARGE SCALE GENOMIC DNA]</scope>
    <source>
        <strain>MC40-6</strain>
    </source>
</reference>
<accession>B1YRW0</accession>
<gene>
    <name evidence="1" type="primary">hisA</name>
    <name type="ordered locus">BamMC406_0357</name>
</gene>
<protein>
    <recommendedName>
        <fullName evidence="1">1-(5-phosphoribosyl)-5-[(5-phosphoribosylamino)methylideneamino] imidazole-4-carboxamide isomerase</fullName>
        <ecNumber evidence="1">5.3.1.16</ecNumber>
    </recommendedName>
    <alternativeName>
        <fullName evidence="1">Phosphoribosylformimino-5-aminoimidazole carboxamide ribotide isomerase</fullName>
    </alternativeName>
</protein>
<proteinExistence type="inferred from homology"/>
<keyword id="KW-0028">Amino-acid biosynthesis</keyword>
<keyword id="KW-0963">Cytoplasm</keyword>
<keyword id="KW-0368">Histidine biosynthesis</keyword>
<keyword id="KW-0413">Isomerase</keyword>